<accession>Q7MY28</accession>
<gene>
    <name type="ordered locus">plu4865</name>
</gene>
<evidence type="ECO:0000255" key="1">
    <source>
        <dbReference type="HAMAP-Rule" id="MF_00018"/>
    </source>
</evidence>
<evidence type="ECO:0000255" key="2">
    <source>
        <dbReference type="PROSITE-ProRule" id="PRU01182"/>
    </source>
</evidence>
<comment type="similarity">
    <text evidence="1">Belongs to the UPF0758 family. YicR subfamily.</text>
</comment>
<dbReference type="EMBL" id="BX571875">
    <property type="protein sequence ID" value="CAE17237.1"/>
    <property type="molecule type" value="Genomic_DNA"/>
</dbReference>
<dbReference type="RefSeq" id="WP_011148922.1">
    <property type="nucleotide sequence ID" value="NC_005126.1"/>
</dbReference>
<dbReference type="SMR" id="Q7MY28"/>
<dbReference type="STRING" id="243265.plu4865"/>
<dbReference type="GeneID" id="48851094"/>
<dbReference type="KEGG" id="plu:plu4865"/>
<dbReference type="eggNOG" id="COG2003">
    <property type="taxonomic scope" value="Bacteria"/>
</dbReference>
<dbReference type="HOGENOM" id="CLU_073529_0_1_6"/>
<dbReference type="OrthoDB" id="9804482at2"/>
<dbReference type="Proteomes" id="UP000002514">
    <property type="component" value="Chromosome"/>
</dbReference>
<dbReference type="GO" id="GO:0046872">
    <property type="term" value="F:metal ion binding"/>
    <property type="evidence" value="ECO:0007669"/>
    <property type="project" value="UniProtKB-KW"/>
</dbReference>
<dbReference type="GO" id="GO:0008237">
    <property type="term" value="F:metallopeptidase activity"/>
    <property type="evidence" value="ECO:0007669"/>
    <property type="project" value="UniProtKB-KW"/>
</dbReference>
<dbReference type="GO" id="GO:0006508">
    <property type="term" value="P:proteolysis"/>
    <property type="evidence" value="ECO:0007669"/>
    <property type="project" value="UniProtKB-KW"/>
</dbReference>
<dbReference type="CDD" id="cd08071">
    <property type="entry name" value="MPN_DUF2466"/>
    <property type="match status" value="1"/>
</dbReference>
<dbReference type="Gene3D" id="3.40.140.10">
    <property type="entry name" value="Cytidine Deaminase, domain 2"/>
    <property type="match status" value="1"/>
</dbReference>
<dbReference type="HAMAP" id="MF_00018">
    <property type="entry name" value="UPF0758_YicR"/>
    <property type="match status" value="1"/>
</dbReference>
<dbReference type="InterPro" id="IPR037518">
    <property type="entry name" value="MPN"/>
</dbReference>
<dbReference type="InterPro" id="IPR025657">
    <property type="entry name" value="RadC_JAB"/>
</dbReference>
<dbReference type="InterPro" id="IPR010994">
    <property type="entry name" value="RuvA_2-like"/>
</dbReference>
<dbReference type="InterPro" id="IPR001405">
    <property type="entry name" value="UPF0758"/>
</dbReference>
<dbReference type="InterPro" id="IPR020891">
    <property type="entry name" value="UPF0758_CS"/>
</dbReference>
<dbReference type="InterPro" id="IPR046778">
    <property type="entry name" value="UPF0758_N"/>
</dbReference>
<dbReference type="InterPro" id="IPR022820">
    <property type="entry name" value="UPF0758_YicR"/>
</dbReference>
<dbReference type="NCBIfam" id="NF000642">
    <property type="entry name" value="PRK00024.1"/>
    <property type="match status" value="1"/>
</dbReference>
<dbReference type="NCBIfam" id="TIGR00608">
    <property type="entry name" value="radc"/>
    <property type="match status" value="1"/>
</dbReference>
<dbReference type="PANTHER" id="PTHR30471">
    <property type="entry name" value="DNA REPAIR PROTEIN RADC"/>
    <property type="match status" value="1"/>
</dbReference>
<dbReference type="PANTHER" id="PTHR30471:SF3">
    <property type="entry name" value="UPF0758 PROTEIN YEES-RELATED"/>
    <property type="match status" value="1"/>
</dbReference>
<dbReference type="Pfam" id="PF04002">
    <property type="entry name" value="RadC"/>
    <property type="match status" value="1"/>
</dbReference>
<dbReference type="Pfam" id="PF20582">
    <property type="entry name" value="UPF0758_N"/>
    <property type="match status" value="1"/>
</dbReference>
<dbReference type="SUPFAM" id="SSF47781">
    <property type="entry name" value="RuvA domain 2-like"/>
    <property type="match status" value="1"/>
</dbReference>
<dbReference type="PROSITE" id="PS50249">
    <property type="entry name" value="MPN"/>
    <property type="match status" value="1"/>
</dbReference>
<dbReference type="PROSITE" id="PS01302">
    <property type="entry name" value="UPF0758"/>
    <property type="match status" value="1"/>
</dbReference>
<protein>
    <recommendedName>
        <fullName evidence="1">UPF0758 protein plu4865</fullName>
    </recommendedName>
</protein>
<organism>
    <name type="scientific">Photorhabdus laumondii subsp. laumondii (strain DSM 15139 / CIP 105565 / TT01)</name>
    <name type="common">Photorhabdus luminescens subsp. laumondii</name>
    <dbReference type="NCBI Taxonomy" id="243265"/>
    <lineage>
        <taxon>Bacteria</taxon>
        <taxon>Pseudomonadati</taxon>
        <taxon>Pseudomonadota</taxon>
        <taxon>Gammaproteobacteria</taxon>
        <taxon>Enterobacterales</taxon>
        <taxon>Morganellaceae</taxon>
        <taxon>Photorhabdus</taxon>
    </lineage>
</organism>
<proteinExistence type="inferred from homology"/>
<feature type="chain" id="PRO_0000190715" description="UPF0758 protein plu4865">
    <location>
        <begin position="1"/>
        <end position="230"/>
    </location>
</feature>
<feature type="domain" description="MPN" evidence="2">
    <location>
        <begin position="108"/>
        <end position="230"/>
    </location>
</feature>
<feature type="short sequence motif" description="JAMM motif" evidence="2">
    <location>
        <begin position="179"/>
        <end position="192"/>
    </location>
</feature>
<feature type="binding site" evidence="2">
    <location>
        <position position="179"/>
    </location>
    <ligand>
        <name>Zn(2+)</name>
        <dbReference type="ChEBI" id="CHEBI:29105"/>
        <note>catalytic</note>
    </ligand>
</feature>
<feature type="binding site" evidence="2">
    <location>
        <position position="181"/>
    </location>
    <ligand>
        <name>Zn(2+)</name>
        <dbReference type="ChEBI" id="CHEBI:29105"/>
        <note>catalytic</note>
    </ligand>
</feature>
<feature type="binding site" evidence="2">
    <location>
        <position position="192"/>
    </location>
    <ligand>
        <name>Zn(2+)</name>
        <dbReference type="ChEBI" id="CHEBI:29105"/>
        <note>catalytic</note>
    </ligand>
</feature>
<sequence>MGIDVAENTGEIYSNLAPREKLLAYGSVSLTDAELLAIFLRTGTRGLPVLRMAEFLLKEFGSLYHLLSADYDTFCSHKGMGLAKYAQLQAIAELAKRFFSSQFMHEDIMSSPSVTQEYLQNLLSGRDREIFVVLFLNNQNRVICHEEMFKGTINKVEVHPREIVRSAIKVNASSVILAHNHPSGHAEPSLADKIVTDKVIDACNLVGVKVLDHLVIGRQCCVSFAERGWI</sequence>
<name>Y4865_PHOLL</name>
<reference key="1">
    <citation type="journal article" date="2003" name="Nat. Biotechnol.">
        <title>The genome sequence of the entomopathogenic bacterium Photorhabdus luminescens.</title>
        <authorList>
            <person name="Duchaud E."/>
            <person name="Rusniok C."/>
            <person name="Frangeul L."/>
            <person name="Buchrieser C."/>
            <person name="Givaudan A."/>
            <person name="Taourit S."/>
            <person name="Bocs S."/>
            <person name="Boursaux-Eude C."/>
            <person name="Chandler M."/>
            <person name="Charles J.-F."/>
            <person name="Dassa E."/>
            <person name="Derose R."/>
            <person name="Derzelle S."/>
            <person name="Freyssinet G."/>
            <person name="Gaudriault S."/>
            <person name="Medigue C."/>
            <person name="Lanois A."/>
            <person name="Powell K."/>
            <person name="Siguier P."/>
            <person name="Vincent R."/>
            <person name="Wingate V."/>
            <person name="Zouine M."/>
            <person name="Glaser P."/>
            <person name="Boemare N."/>
            <person name="Danchin A."/>
            <person name="Kunst F."/>
        </authorList>
    </citation>
    <scope>NUCLEOTIDE SEQUENCE [LARGE SCALE GENOMIC DNA]</scope>
    <source>
        <strain>DSM 15139 / CIP 105565 / TT01</strain>
    </source>
</reference>
<keyword id="KW-0378">Hydrolase</keyword>
<keyword id="KW-0479">Metal-binding</keyword>
<keyword id="KW-0482">Metalloprotease</keyword>
<keyword id="KW-0645">Protease</keyword>
<keyword id="KW-1185">Reference proteome</keyword>
<keyword id="KW-0862">Zinc</keyword>